<feature type="signal peptide" evidence="2">
    <location>
        <begin position="1"/>
        <end position="24"/>
    </location>
</feature>
<feature type="chain" id="PRO_0000024883" description="Probable pectate lyase 18">
    <location>
        <begin position="25"/>
        <end position="408"/>
    </location>
</feature>
<feature type="active site" evidence="2">
    <location>
        <position position="286"/>
    </location>
</feature>
<feature type="binding site" evidence="1">
    <location>
        <position position="206"/>
    </location>
    <ligand>
        <name>Ca(2+)</name>
        <dbReference type="ChEBI" id="CHEBI:29108"/>
    </ligand>
</feature>
<feature type="binding site" evidence="1">
    <location>
        <position position="230"/>
    </location>
    <ligand>
        <name>Ca(2+)</name>
        <dbReference type="ChEBI" id="CHEBI:29108"/>
    </ligand>
</feature>
<feature type="binding site" evidence="1">
    <location>
        <position position="234"/>
    </location>
    <ligand>
        <name>Ca(2+)</name>
        <dbReference type="ChEBI" id="CHEBI:29108"/>
    </ligand>
</feature>
<feature type="glycosylation site" description="N-linked (GlcNAc...) asparagine" evidence="2">
    <location>
        <position position="42"/>
    </location>
</feature>
<feature type="sequence conflict" description="In Ref. 4; AAM65103." evidence="4" ref="4">
    <original>D</original>
    <variation>Y</variation>
    <location>
        <position position="107"/>
    </location>
</feature>
<feature type="sequence conflict" description="In Ref. 5; AAB69761." evidence="4" ref="5">
    <original>H</original>
    <variation>R</variation>
    <location>
        <position position="252"/>
    </location>
</feature>
<feature type="sequence conflict" description="In Ref. 3; AAK25850." evidence="4" ref="3">
    <original>Q</original>
    <variation>H</variation>
    <location>
        <position position="271"/>
    </location>
</feature>
<feature type="sequence conflict" description="In Ref. 4; AAM65103." evidence="4" ref="4">
    <original>H</original>
    <variation>D</variation>
    <location>
        <position position="339"/>
    </location>
</feature>
<accession>Q9C5M8</accession>
<accession>O23667</accession>
<accession>Q8LAW7</accession>
<accession>Q9SB71</accession>
<protein>
    <recommendedName>
        <fullName>Probable pectate lyase 18</fullName>
        <ecNumber>4.2.2.2</ecNumber>
    </recommendedName>
    <alternativeName>
        <fullName>Pectate lyase A10</fullName>
    </alternativeName>
</protein>
<proteinExistence type="evidence at transcript level"/>
<keyword id="KW-0106">Calcium</keyword>
<keyword id="KW-0325">Glycoprotein</keyword>
<keyword id="KW-0456">Lyase</keyword>
<keyword id="KW-0479">Metal-binding</keyword>
<keyword id="KW-1185">Reference proteome</keyword>
<keyword id="KW-0732">Signal</keyword>
<reference key="1">
    <citation type="journal article" date="1999" name="Nature">
        <title>Sequence and analysis of chromosome 4 of the plant Arabidopsis thaliana.</title>
        <authorList>
            <person name="Mayer K.F.X."/>
            <person name="Schueller C."/>
            <person name="Wambutt R."/>
            <person name="Murphy G."/>
            <person name="Volckaert G."/>
            <person name="Pohl T."/>
            <person name="Duesterhoeft A."/>
            <person name="Stiekema W."/>
            <person name="Entian K.-D."/>
            <person name="Terryn N."/>
            <person name="Harris B."/>
            <person name="Ansorge W."/>
            <person name="Brandt P."/>
            <person name="Grivell L.A."/>
            <person name="Rieger M."/>
            <person name="Weichselgartner M."/>
            <person name="de Simone V."/>
            <person name="Obermaier B."/>
            <person name="Mache R."/>
            <person name="Mueller M."/>
            <person name="Kreis M."/>
            <person name="Delseny M."/>
            <person name="Puigdomenech P."/>
            <person name="Watson M."/>
            <person name="Schmidtheini T."/>
            <person name="Reichert B."/>
            <person name="Portetelle D."/>
            <person name="Perez-Alonso M."/>
            <person name="Boutry M."/>
            <person name="Bancroft I."/>
            <person name="Vos P."/>
            <person name="Hoheisel J."/>
            <person name="Zimmermann W."/>
            <person name="Wedler H."/>
            <person name="Ridley P."/>
            <person name="Langham S.-A."/>
            <person name="McCullagh B."/>
            <person name="Bilham L."/>
            <person name="Robben J."/>
            <person name="van der Schueren J."/>
            <person name="Grymonprez B."/>
            <person name="Chuang Y.-J."/>
            <person name="Vandenbussche F."/>
            <person name="Braeken M."/>
            <person name="Weltjens I."/>
            <person name="Voet M."/>
            <person name="Bastiaens I."/>
            <person name="Aert R."/>
            <person name="Defoor E."/>
            <person name="Weitzenegger T."/>
            <person name="Bothe G."/>
            <person name="Ramsperger U."/>
            <person name="Hilbert H."/>
            <person name="Braun M."/>
            <person name="Holzer E."/>
            <person name="Brandt A."/>
            <person name="Peters S."/>
            <person name="van Staveren M."/>
            <person name="Dirkse W."/>
            <person name="Mooijman P."/>
            <person name="Klein Lankhorst R."/>
            <person name="Rose M."/>
            <person name="Hauf J."/>
            <person name="Koetter P."/>
            <person name="Berneiser S."/>
            <person name="Hempel S."/>
            <person name="Feldpausch M."/>
            <person name="Lamberth S."/>
            <person name="Van den Daele H."/>
            <person name="De Keyser A."/>
            <person name="Buysshaert C."/>
            <person name="Gielen J."/>
            <person name="Villarroel R."/>
            <person name="De Clercq R."/>
            <person name="van Montagu M."/>
            <person name="Rogers J."/>
            <person name="Cronin A."/>
            <person name="Quail M.A."/>
            <person name="Bray-Allen S."/>
            <person name="Clark L."/>
            <person name="Doggett J."/>
            <person name="Hall S."/>
            <person name="Kay M."/>
            <person name="Lennard N."/>
            <person name="McLay K."/>
            <person name="Mayes R."/>
            <person name="Pettett A."/>
            <person name="Rajandream M.A."/>
            <person name="Lyne M."/>
            <person name="Benes V."/>
            <person name="Rechmann S."/>
            <person name="Borkova D."/>
            <person name="Bloecker H."/>
            <person name="Scharfe M."/>
            <person name="Grimm M."/>
            <person name="Loehnert T.-H."/>
            <person name="Dose S."/>
            <person name="de Haan M."/>
            <person name="Maarse A.C."/>
            <person name="Schaefer M."/>
            <person name="Mueller-Auer S."/>
            <person name="Gabel C."/>
            <person name="Fuchs M."/>
            <person name="Fartmann B."/>
            <person name="Granderath K."/>
            <person name="Dauner D."/>
            <person name="Herzl A."/>
            <person name="Neumann S."/>
            <person name="Argiriou A."/>
            <person name="Vitale D."/>
            <person name="Liguori R."/>
            <person name="Piravandi E."/>
            <person name="Massenet O."/>
            <person name="Quigley F."/>
            <person name="Clabauld G."/>
            <person name="Muendlein A."/>
            <person name="Felber R."/>
            <person name="Schnabl S."/>
            <person name="Hiller R."/>
            <person name="Schmidt W."/>
            <person name="Lecharny A."/>
            <person name="Aubourg S."/>
            <person name="Chefdor F."/>
            <person name="Cooke R."/>
            <person name="Berger C."/>
            <person name="Monfort A."/>
            <person name="Casacuberta E."/>
            <person name="Gibbons T."/>
            <person name="Weber N."/>
            <person name="Vandenbol M."/>
            <person name="Bargues M."/>
            <person name="Terol J."/>
            <person name="Torres A."/>
            <person name="Perez-Perez A."/>
            <person name="Purnelle B."/>
            <person name="Bent E."/>
            <person name="Johnson S."/>
            <person name="Tacon D."/>
            <person name="Jesse T."/>
            <person name="Heijnen L."/>
            <person name="Schwarz S."/>
            <person name="Scholler P."/>
            <person name="Heber S."/>
            <person name="Francs P."/>
            <person name="Bielke C."/>
            <person name="Frishman D."/>
            <person name="Haase D."/>
            <person name="Lemcke K."/>
            <person name="Mewes H.-W."/>
            <person name="Stocker S."/>
            <person name="Zaccaria P."/>
            <person name="Bevan M."/>
            <person name="Wilson R.K."/>
            <person name="de la Bastide M."/>
            <person name="Habermann K."/>
            <person name="Parnell L."/>
            <person name="Dedhia N."/>
            <person name="Gnoj L."/>
            <person name="Schutz K."/>
            <person name="Huang E."/>
            <person name="Spiegel L."/>
            <person name="Sekhon M."/>
            <person name="Murray J."/>
            <person name="Sheet P."/>
            <person name="Cordes M."/>
            <person name="Abu-Threideh J."/>
            <person name="Stoneking T."/>
            <person name="Kalicki J."/>
            <person name="Graves T."/>
            <person name="Harmon G."/>
            <person name="Edwards J."/>
            <person name="Latreille P."/>
            <person name="Courtney L."/>
            <person name="Cloud J."/>
            <person name="Abbott A."/>
            <person name="Scott K."/>
            <person name="Johnson D."/>
            <person name="Minx P."/>
            <person name="Bentley D."/>
            <person name="Fulton B."/>
            <person name="Miller N."/>
            <person name="Greco T."/>
            <person name="Kemp K."/>
            <person name="Kramer J."/>
            <person name="Fulton L."/>
            <person name="Mardis E."/>
            <person name="Dante M."/>
            <person name="Pepin K."/>
            <person name="Hillier L.W."/>
            <person name="Nelson J."/>
            <person name="Spieth J."/>
            <person name="Ryan E."/>
            <person name="Andrews S."/>
            <person name="Geisel C."/>
            <person name="Layman D."/>
            <person name="Du H."/>
            <person name="Ali J."/>
            <person name="Berghoff A."/>
            <person name="Jones K."/>
            <person name="Drone K."/>
            <person name="Cotton M."/>
            <person name="Joshu C."/>
            <person name="Antonoiu B."/>
            <person name="Zidanic M."/>
            <person name="Strong C."/>
            <person name="Sun H."/>
            <person name="Lamar B."/>
            <person name="Yordan C."/>
            <person name="Ma P."/>
            <person name="Zhong J."/>
            <person name="Preston R."/>
            <person name="Vil D."/>
            <person name="Shekher M."/>
            <person name="Matero A."/>
            <person name="Shah R."/>
            <person name="Swaby I.K."/>
            <person name="O'Shaughnessy A."/>
            <person name="Rodriguez M."/>
            <person name="Hoffman J."/>
            <person name="Till S."/>
            <person name="Granat S."/>
            <person name="Shohdy N."/>
            <person name="Hasegawa A."/>
            <person name="Hameed A."/>
            <person name="Lodhi M."/>
            <person name="Johnson A."/>
            <person name="Chen E."/>
            <person name="Marra M.A."/>
            <person name="Martienssen R."/>
            <person name="McCombie W.R."/>
        </authorList>
    </citation>
    <scope>NUCLEOTIDE SEQUENCE [LARGE SCALE GENOMIC DNA]</scope>
    <source>
        <strain>cv. Columbia</strain>
    </source>
</reference>
<reference key="2">
    <citation type="journal article" date="2017" name="Plant J.">
        <title>Araport11: a complete reannotation of the Arabidopsis thaliana reference genome.</title>
        <authorList>
            <person name="Cheng C.Y."/>
            <person name="Krishnakumar V."/>
            <person name="Chan A.P."/>
            <person name="Thibaud-Nissen F."/>
            <person name="Schobel S."/>
            <person name="Town C.D."/>
        </authorList>
    </citation>
    <scope>GENOME REANNOTATION</scope>
    <source>
        <strain>cv. Columbia</strain>
    </source>
</reference>
<reference key="3">
    <citation type="journal article" date="2003" name="Science">
        <title>Empirical analysis of transcriptional activity in the Arabidopsis genome.</title>
        <authorList>
            <person name="Yamada K."/>
            <person name="Lim J."/>
            <person name="Dale J.M."/>
            <person name="Chen H."/>
            <person name="Shinn P."/>
            <person name="Palm C.J."/>
            <person name="Southwick A.M."/>
            <person name="Wu H.C."/>
            <person name="Kim C.J."/>
            <person name="Nguyen M."/>
            <person name="Pham P.K."/>
            <person name="Cheuk R.F."/>
            <person name="Karlin-Newmann G."/>
            <person name="Liu S.X."/>
            <person name="Lam B."/>
            <person name="Sakano H."/>
            <person name="Wu T."/>
            <person name="Yu G."/>
            <person name="Miranda M."/>
            <person name="Quach H.L."/>
            <person name="Tripp M."/>
            <person name="Chang C.H."/>
            <person name="Lee J.M."/>
            <person name="Toriumi M.J."/>
            <person name="Chan M.M."/>
            <person name="Tang C.C."/>
            <person name="Onodera C.S."/>
            <person name="Deng J.M."/>
            <person name="Akiyama K."/>
            <person name="Ansari Y."/>
            <person name="Arakawa T."/>
            <person name="Banh J."/>
            <person name="Banno F."/>
            <person name="Bowser L."/>
            <person name="Brooks S.Y."/>
            <person name="Carninci P."/>
            <person name="Chao Q."/>
            <person name="Choy N."/>
            <person name="Enju A."/>
            <person name="Goldsmith A.D."/>
            <person name="Gurjal M."/>
            <person name="Hansen N.F."/>
            <person name="Hayashizaki Y."/>
            <person name="Johnson-Hopson C."/>
            <person name="Hsuan V.W."/>
            <person name="Iida K."/>
            <person name="Karnes M."/>
            <person name="Khan S."/>
            <person name="Koesema E."/>
            <person name="Ishida J."/>
            <person name="Jiang P.X."/>
            <person name="Jones T."/>
            <person name="Kawai J."/>
            <person name="Kamiya A."/>
            <person name="Meyers C."/>
            <person name="Nakajima M."/>
            <person name="Narusaka M."/>
            <person name="Seki M."/>
            <person name="Sakurai T."/>
            <person name="Satou M."/>
            <person name="Tamse R."/>
            <person name="Vaysberg M."/>
            <person name="Wallender E.K."/>
            <person name="Wong C."/>
            <person name="Yamamura Y."/>
            <person name="Yuan S."/>
            <person name="Shinozaki K."/>
            <person name="Davis R.W."/>
            <person name="Theologis A."/>
            <person name="Ecker J.R."/>
        </authorList>
    </citation>
    <scope>NUCLEOTIDE SEQUENCE [LARGE SCALE MRNA]</scope>
    <source>
        <strain>cv. Columbia</strain>
    </source>
</reference>
<reference key="4">
    <citation type="submission" date="2002-03" db="EMBL/GenBank/DDBJ databases">
        <title>Full-length cDNA from Arabidopsis thaliana.</title>
        <authorList>
            <person name="Brover V.V."/>
            <person name="Troukhan M.E."/>
            <person name="Alexandrov N.A."/>
            <person name="Lu Y.-P."/>
            <person name="Flavell R.B."/>
            <person name="Feldmann K.A."/>
        </authorList>
    </citation>
    <scope>NUCLEOTIDE SEQUENCE [LARGE SCALE MRNA]</scope>
</reference>
<reference key="5">
    <citation type="journal article" date="1997" name="Plant Mol. Biol.">
        <title>Identification of the tobacco and Arabidopsis homologues of the pollen-expressed LAT59 gene of tomato.</title>
        <authorList>
            <person name="Kulikauskas R."/>
            <person name="McCormick S."/>
        </authorList>
    </citation>
    <scope>NUCLEOTIDE SEQUENCE [GENOMIC DNA] OF 73-298</scope>
    <scope>TISSUE SPECIFICITY</scope>
</reference>
<evidence type="ECO:0000250" key="1"/>
<evidence type="ECO:0000255" key="2"/>
<evidence type="ECO:0000269" key="3">
    <source>
    </source>
</evidence>
<evidence type="ECO:0000305" key="4"/>
<name>PLY18_ARATH</name>
<dbReference type="EC" id="4.2.2.2"/>
<dbReference type="EMBL" id="AL035356">
    <property type="protein sequence ID" value="CAA22985.1"/>
    <property type="status" value="ALT_SEQ"/>
    <property type="molecule type" value="Genomic_DNA"/>
</dbReference>
<dbReference type="EMBL" id="AL161562">
    <property type="protein sequence ID" value="CAB79388.1"/>
    <property type="status" value="ALT_SEQ"/>
    <property type="molecule type" value="Genomic_DNA"/>
</dbReference>
<dbReference type="EMBL" id="CP002687">
    <property type="protein sequence ID" value="AEE84955.1"/>
    <property type="molecule type" value="Genomic_DNA"/>
</dbReference>
<dbReference type="EMBL" id="CP002687">
    <property type="protein sequence ID" value="AEE84956.1"/>
    <property type="molecule type" value="Genomic_DNA"/>
</dbReference>
<dbReference type="EMBL" id="AF360140">
    <property type="protein sequence ID" value="AAK25850.1"/>
    <property type="molecule type" value="mRNA"/>
</dbReference>
<dbReference type="EMBL" id="AY087561">
    <property type="protein sequence ID" value="AAM65103.1"/>
    <property type="status" value="ALT_INIT"/>
    <property type="molecule type" value="mRNA"/>
</dbReference>
<dbReference type="EMBL" id="U83621">
    <property type="protein sequence ID" value="AAB69761.1"/>
    <property type="molecule type" value="Genomic_DNA"/>
</dbReference>
<dbReference type="PIR" id="T05556">
    <property type="entry name" value="T05556"/>
</dbReference>
<dbReference type="RefSeq" id="NP_001190827.1">
    <property type="nucleotide sequence ID" value="NM_001203898.1"/>
</dbReference>
<dbReference type="RefSeq" id="NP_567707.1">
    <property type="nucleotide sequence ID" value="NM_118611.3"/>
</dbReference>
<dbReference type="SMR" id="Q9C5M8"/>
<dbReference type="BioGRID" id="13869">
    <property type="interactions" value="2"/>
</dbReference>
<dbReference type="FunCoup" id="Q9C5M8">
    <property type="interactions" value="108"/>
</dbReference>
<dbReference type="STRING" id="3702.Q9C5M8"/>
<dbReference type="CAZy" id="PL1">
    <property type="family name" value="Polysaccharide Lyase Family 1"/>
</dbReference>
<dbReference type="GlyGen" id="Q9C5M8">
    <property type="glycosylation" value="1 site"/>
</dbReference>
<dbReference type="PaxDb" id="3702-AT4G24780.1"/>
<dbReference type="ProteomicsDB" id="234733"/>
<dbReference type="EnsemblPlants" id="AT4G24780.1">
    <property type="protein sequence ID" value="AT4G24780.1"/>
    <property type="gene ID" value="AT4G24780"/>
</dbReference>
<dbReference type="EnsemblPlants" id="AT4G24780.2">
    <property type="protein sequence ID" value="AT4G24780.2"/>
    <property type="gene ID" value="AT4G24780"/>
</dbReference>
<dbReference type="GeneID" id="828580"/>
<dbReference type="Gramene" id="AT4G24780.1">
    <property type="protein sequence ID" value="AT4G24780.1"/>
    <property type="gene ID" value="AT4G24780"/>
</dbReference>
<dbReference type="Gramene" id="AT4G24780.2">
    <property type="protein sequence ID" value="AT4G24780.2"/>
    <property type="gene ID" value="AT4G24780"/>
</dbReference>
<dbReference type="KEGG" id="ath:AT4G24780"/>
<dbReference type="Araport" id="AT4G24780"/>
<dbReference type="TAIR" id="AT4G24780">
    <property type="gene designation" value="PLL19"/>
</dbReference>
<dbReference type="eggNOG" id="ENOG502QQ5F">
    <property type="taxonomic scope" value="Eukaryota"/>
</dbReference>
<dbReference type="HOGENOM" id="CLU_026608_0_1_1"/>
<dbReference type="InParanoid" id="Q9C5M8"/>
<dbReference type="OMA" id="WIMFERD"/>
<dbReference type="PhylomeDB" id="Q9C5M8"/>
<dbReference type="BioCyc" id="ARA:AT4G24780-MONOMER"/>
<dbReference type="UniPathway" id="UPA00545">
    <property type="reaction ID" value="UER00824"/>
</dbReference>
<dbReference type="CD-CODE" id="4299E36E">
    <property type="entry name" value="Nucleolus"/>
</dbReference>
<dbReference type="PRO" id="PR:Q9C5M8"/>
<dbReference type="Proteomes" id="UP000006548">
    <property type="component" value="Chromosome 4"/>
</dbReference>
<dbReference type="ExpressionAtlas" id="Q9C5M8">
    <property type="expression patterns" value="baseline and differential"/>
</dbReference>
<dbReference type="GO" id="GO:0005829">
    <property type="term" value="C:cytosol"/>
    <property type="evidence" value="ECO:0007005"/>
    <property type="project" value="TAIR"/>
</dbReference>
<dbReference type="GO" id="GO:0046872">
    <property type="term" value="F:metal ion binding"/>
    <property type="evidence" value="ECO:0007669"/>
    <property type="project" value="UniProtKB-KW"/>
</dbReference>
<dbReference type="GO" id="GO:0030570">
    <property type="term" value="F:pectate lyase activity"/>
    <property type="evidence" value="ECO:0007669"/>
    <property type="project" value="UniProtKB-EC"/>
</dbReference>
<dbReference type="GO" id="GO:0045490">
    <property type="term" value="P:pectin catabolic process"/>
    <property type="evidence" value="ECO:0007669"/>
    <property type="project" value="UniProtKB-UniPathway"/>
</dbReference>
<dbReference type="GO" id="GO:0009624">
    <property type="term" value="P:response to nematode"/>
    <property type="evidence" value="ECO:0000315"/>
    <property type="project" value="TAIR"/>
</dbReference>
<dbReference type="FunFam" id="2.160.20.10:FF:000009">
    <property type="entry name" value="Pectate lyase"/>
    <property type="match status" value="1"/>
</dbReference>
<dbReference type="Gene3D" id="2.160.20.10">
    <property type="entry name" value="Single-stranded right-handed beta-helix, Pectin lyase-like"/>
    <property type="match status" value="1"/>
</dbReference>
<dbReference type="InterPro" id="IPR018082">
    <property type="entry name" value="AmbAllergen"/>
</dbReference>
<dbReference type="InterPro" id="IPR002022">
    <property type="entry name" value="Pec_lyase"/>
</dbReference>
<dbReference type="InterPro" id="IPR012334">
    <property type="entry name" value="Pectin_lyas_fold"/>
</dbReference>
<dbReference type="InterPro" id="IPR011050">
    <property type="entry name" value="Pectin_lyase_fold/virulence"/>
</dbReference>
<dbReference type="InterPro" id="IPR045032">
    <property type="entry name" value="PEL"/>
</dbReference>
<dbReference type="PANTHER" id="PTHR31683">
    <property type="entry name" value="PECTATE LYASE 18-RELATED"/>
    <property type="match status" value="1"/>
</dbReference>
<dbReference type="PANTHER" id="PTHR31683:SF187">
    <property type="entry name" value="PECTATE LYASE 18-RELATED"/>
    <property type="match status" value="1"/>
</dbReference>
<dbReference type="Pfam" id="PF00544">
    <property type="entry name" value="Pectate_lyase_4"/>
    <property type="match status" value="1"/>
</dbReference>
<dbReference type="PRINTS" id="PR00807">
    <property type="entry name" value="AMBALLERGEN"/>
</dbReference>
<dbReference type="SMART" id="SM00656">
    <property type="entry name" value="Amb_all"/>
    <property type="match status" value="1"/>
</dbReference>
<dbReference type="SUPFAM" id="SSF51126">
    <property type="entry name" value="Pectin lyase-like"/>
    <property type="match status" value="1"/>
</dbReference>
<organism>
    <name type="scientific">Arabidopsis thaliana</name>
    <name type="common">Mouse-ear cress</name>
    <dbReference type="NCBI Taxonomy" id="3702"/>
    <lineage>
        <taxon>Eukaryota</taxon>
        <taxon>Viridiplantae</taxon>
        <taxon>Streptophyta</taxon>
        <taxon>Embryophyta</taxon>
        <taxon>Tracheophyta</taxon>
        <taxon>Spermatophyta</taxon>
        <taxon>Magnoliopsida</taxon>
        <taxon>eudicotyledons</taxon>
        <taxon>Gunneridae</taxon>
        <taxon>Pentapetalae</taxon>
        <taxon>rosids</taxon>
        <taxon>malvids</taxon>
        <taxon>Brassicales</taxon>
        <taxon>Brassicaceae</taxon>
        <taxon>Camelineae</taxon>
        <taxon>Arabidopsis</taxon>
    </lineage>
</organism>
<sequence>MKMQTKKLFITIVSFLLYAPLFLSSPVPDPESVVEEVHKSINASVAGRRKLGYLSCTTGNPIDDCWRCDPHWEQHRQRLADCAIGFGKNAIGGRDGRIYVVTDSGNDNPVSPKPGTLRHAVVQDEPLWIIFQRDMTIQLKEELIMNSFKTIDGRGASVHISGGPCITIQYVTNIIIHGIHIHDCKQGGNAMVRSSPRHFGWRTISDGDGVSIFGGSHVWVDHCSFSNCEDGLIDAIMGSTAITLSNNHMTHHDKVMLLGHSDTYSRDKNMQVTIAFNHFGEGLVQRMPRCRHGYFHVVNNDYTHWEMYAIGGSANPTINSQGNRFLAPNIRFSKEVTKHEDAPESEWKRWNWRSSGDLLLNGAFFTPSGGAASSSYAKASSLGAKPSSLVGPLTSTSGALNCRKGSRC</sequence>
<gene>
    <name type="ordered locus">At4g24780</name>
    <name type="ORF">F22K18.20</name>
</gene>
<comment type="catalytic activity">
    <reaction>
        <text>Eliminative cleavage of (1-&gt;4)-alpha-D-galacturonan to give oligosaccharides with 4-deoxy-alpha-D-galact-4-enuronosyl groups at their non-reducing ends.</text>
        <dbReference type="EC" id="4.2.2.2"/>
    </reaction>
</comment>
<comment type="cofactor">
    <cofactor evidence="1">
        <name>Ca(2+)</name>
        <dbReference type="ChEBI" id="CHEBI:29108"/>
    </cofactor>
    <text evidence="1">Binds 1 Ca(2+) ion. Required for its activity.</text>
</comment>
<comment type="pathway">
    <text>Glycan metabolism; pectin degradation; 2-dehydro-3-deoxy-D-gluconate from pectin: step 2/5.</text>
</comment>
<comment type="tissue specificity">
    <text evidence="3">Expressed in flowers, but not in leaves.</text>
</comment>
<comment type="similarity">
    <text evidence="4">Belongs to the polysaccharide lyase 1 family.</text>
</comment>
<comment type="sequence caution" evidence="4">
    <conflict type="erroneous initiation">
        <sequence resource="EMBL-CDS" id="AAM65103"/>
    </conflict>
</comment>
<comment type="sequence caution" evidence="4">
    <conflict type="erroneous gene model prediction">
        <sequence resource="EMBL-CDS" id="CAA22985"/>
    </conflict>
</comment>
<comment type="sequence caution" evidence="4">
    <conflict type="erroneous gene model prediction">
        <sequence resource="EMBL-CDS" id="CAB79388"/>
    </conflict>
</comment>